<name>CBID_PYRAE</name>
<evidence type="ECO:0000255" key="1">
    <source>
        <dbReference type="HAMAP-Rule" id="MF_00787"/>
    </source>
</evidence>
<feature type="chain" id="PRO_0000141697" description="Cobalt-precorrin-5B C(1)-methyltransferase">
    <location>
        <begin position="1"/>
        <end position="340"/>
    </location>
</feature>
<proteinExistence type="inferred from homology"/>
<comment type="function">
    <text evidence="1">Catalyzes the methylation of C-1 in cobalt-precorrin-5B to form cobalt-precorrin-6A.</text>
</comment>
<comment type="catalytic activity">
    <reaction evidence="1">
        <text>Co-precorrin-5B + S-adenosyl-L-methionine = Co-precorrin-6A + S-adenosyl-L-homocysteine</text>
        <dbReference type="Rhea" id="RHEA:26285"/>
        <dbReference type="ChEBI" id="CHEBI:57856"/>
        <dbReference type="ChEBI" id="CHEBI:59789"/>
        <dbReference type="ChEBI" id="CHEBI:60063"/>
        <dbReference type="ChEBI" id="CHEBI:60064"/>
        <dbReference type="EC" id="2.1.1.195"/>
    </reaction>
</comment>
<comment type="pathway">
    <text evidence="1">Cofactor biosynthesis; adenosylcobalamin biosynthesis; cob(II)yrinate a,c-diamide from sirohydrochlorin (anaerobic route): step 6/10.</text>
</comment>
<comment type="similarity">
    <text evidence="1">Belongs to the CbiD family.</text>
</comment>
<protein>
    <recommendedName>
        <fullName evidence="1">Cobalt-precorrin-5B C(1)-methyltransferase</fullName>
        <ecNumber evidence="1">2.1.1.195</ecNumber>
    </recommendedName>
    <alternativeName>
        <fullName evidence="1">Cobalt-precorrin-6A synthase</fullName>
    </alternativeName>
</protein>
<gene>
    <name evidence="1" type="primary">cbiD</name>
    <name type="ordered locus">PAE0346</name>
</gene>
<accession>Q8ZZB0</accession>
<keyword id="KW-0169">Cobalamin biosynthesis</keyword>
<keyword id="KW-0489">Methyltransferase</keyword>
<keyword id="KW-1185">Reference proteome</keyword>
<keyword id="KW-0949">S-adenosyl-L-methionine</keyword>
<keyword id="KW-0808">Transferase</keyword>
<dbReference type="EC" id="2.1.1.195" evidence="1"/>
<dbReference type="EMBL" id="AE009441">
    <property type="protein sequence ID" value="AAL62731.1"/>
    <property type="molecule type" value="Genomic_DNA"/>
</dbReference>
<dbReference type="SMR" id="Q8ZZB0"/>
<dbReference type="FunCoup" id="Q8ZZB0">
    <property type="interactions" value="71"/>
</dbReference>
<dbReference type="STRING" id="178306.PAE0346"/>
<dbReference type="EnsemblBacteria" id="AAL62731">
    <property type="protein sequence ID" value="AAL62731"/>
    <property type="gene ID" value="PAE0346"/>
</dbReference>
<dbReference type="KEGG" id="pai:PAE0346"/>
<dbReference type="PATRIC" id="fig|178306.9.peg.264"/>
<dbReference type="eggNOG" id="arCOG04383">
    <property type="taxonomic scope" value="Archaea"/>
</dbReference>
<dbReference type="HOGENOM" id="CLU_041273_1_0_2"/>
<dbReference type="InParanoid" id="Q8ZZB0"/>
<dbReference type="UniPathway" id="UPA00148">
    <property type="reaction ID" value="UER00227"/>
</dbReference>
<dbReference type="Proteomes" id="UP000002439">
    <property type="component" value="Chromosome"/>
</dbReference>
<dbReference type="GO" id="GO:0043780">
    <property type="term" value="F:cobalt-precorrin-5B C1-methyltransferase activity"/>
    <property type="evidence" value="ECO:0007669"/>
    <property type="project" value="RHEA"/>
</dbReference>
<dbReference type="GO" id="GO:0019251">
    <property type="term" value="P:anaerobic cobalamin biosynthetic process"/>
    <property type="evidence" value="ECO:0007669"/>
    <property type="project" value="UniProtKB-UniRule"/>
</dbReference>
<dbReference type="GO" id="GO:0032259">
    <property type="term" value="P:methylation"/>
    <property type="evidence" value="ECO:0007669"/>
    <property type="project" value="UniProtKB-KW"/>
</dbReference>
<dbReference type="Gene3D" id="3.30.2110.10">
    <property type="entry name" value="CbiD-like"/>
    <property type="match status" value="1"/>
</dbReference>
<dbReference type="HAMAP" id="MF_00787">
    <property type="entry name" value="CbiD"/>
    <property type="match status" value="1"/>
</dbReference>
<dbReference type="InterPro" id="IPR002748">
    <property type="entry name" value="CbiD"/>
</dbReference>
<dbReference type="InterPro" id="IPR036074">
    <property type="entry name" value="CbiD_sf"/>
</dbReference>
<dbReference type="NCBIfam" id="TIGR00312">
    <property type="entry name" value="cbiD"/>
    <property type="match status" value="1"/>
</dbReference>
<dbReference type="PANTHER" id="PTHR35863">
    <property type="entry name" value="COBALT-PRECORRIN-5B C(1)-METHYLTRANSFERASE"/>
    <property type="match status" value="1"/>
</dbReference>
<dbReference type="PANTHER" id="PTHR35863:SF1">
    <property type="entry name" value="COBALT-PRECORRIN-5B C(1)-METHYLTRANSFERASE"/>
    <property type="match status" value="1"/>
</dbReference>
<dbReference type="Pfam" id="PF01888">
    <property type="entry name" value="CbiD"/>
    <property type="match status" value="1"/>
</dbReference>
<dbReference type="PIRSF" id="PIRSF026782">
    <property type="entry name" value="CbiD"/>
    <property type="match status" value="1"/>
</dbReference>
<dbReference type="SUPFAM" id="SSF111342">
    <property type="entry name" value="CbiD-like"/>
    <property type="match status" value="1"/>
</dbReference>
<reference key="1">
    <citation type="journal article" date="2002" name="Proc. Natl. Acad. Sci. U.S.A.">
        <title>Genome sequence of the hyperthermophilic crenarchaeon Pyrobaculum aerophilum.</title>
        <authorList>
            <person name="Fitz-Gibbon S.T."/>
            <person name="Ladner H."/>
            <person name="Kim U.-J."/>
            <person name="Stetter K.O."/>
            <person name="Simon M.I."/>
            <person name="Miller J.H."/>
        </authorList>
    </citation>
    <scope>NUCLEOTIDE SEQUENCE [LARGE SCALE GENOMIC DNA]</scope>
    <source>
        <strain>ATCC 51768 / DSM 7523 / JCM 9630 / CIP 104966 / NBRC 100827 / IM2</strain>
    </source>
</reference>
<sequence length="340" mass="36015">MNPFLKYGITTGLAAAAAAKAAALYSKGIVPKSVTVPTPIGLRVEVFVERVFQRGEIYCAEVRKFSGDNPDVLNGVIIRACVRPLNNGVVIKGGEGVGIVTRPGLPVPPGEHAINPVPRRMIEEAVREVLEGAEVLVEVPDGKLLAEKTMNPRLGIVGGISILGTTGIEAPVSADEFLGHIEAELSALRERRDIAILAQGNTSYKAAQAVFGDVVVKIGDMVGYAVEKAAALGYKAAYLFTMPGKLAKLALGAYNTHSAQCDGRVEAVLYALVKLRAPYEVLLEVSNAASVGEALAKAGDYAGGVIAIMARRAKEYLERFKIPVEIYVVNDKGEVLFSTT</sequence>
<organism>
    <name type="scientific">Pyrobaculum aerophilum (strain ATCC 51768 / DSM 7523 / JCM 9630 / CIP 104966 / NBRC 100827 / IM2)</name>
    <dbReference type="NCBI Taxonomy" id="178306"/>
    <lineage>
        <taxon>Archaea</taxon>
        <taxon>Thermoproteota</taxon>
        <taxon>Thermoprotei</taxon>
        <taxon>Thermoproteales</taxon>
        <taxon>Thermoproteaceae</taxon>
        <taxon>Pyrobaculum</taxon>
    </lineage>
</organism>